<proteinExistence type="inferred from homology"/>
<accession>B1AJ99</accession>
<dbReference type="EC" id="6.1.1.20" evidence="1"/>
<dbReference type="EMBL" id="CP000942">
    <property type="protein sequence ID" value="ACA32827.1"/>
    <property type="molecule type" value="Genomic_DNA"/>
</dbReference>
<dbReference type="RefSeq" id="WP_006689319.1">
    <property type="nucleotide sequence ID" value="NC_010503.1"/>
</dbReference>
<dbReference type="SMR" id="B1AJ99"/>
<dbReference type="GeneID" id="29672675"/>
<dbReference type="KEGG" id="upa:UPA3_0477"/>
<dbReference type="HOGENOM" id="CLU_025086_0_1_14"/>
<dbReference type="Proteomes" id="UP000002162">
    <property type="component" value="Chromosome"/>
</dbReference>
<dbReference type="GO" id="GO:0005737">
    <property type="term" value="C:cytoplasm"/>
    <property type="evidence" value="ECO:0007669"/>
    <property type="project" value="UniProtKB-SubCell"/>
</dbReference>
<dbReference type="GO" id="GO:0005524">
    <property type="term" value="F:ATP binding"/>
    <property type="evidence" value="ECO:0007669"/>
    <property type="project" value="UniProtKB-UniRule"/>
</dbReference>
<dbReference type="GO" id="GO:0000287">
    <property type="term" value="F:magnesium ion binding"/>
    <property type="evidence" value="ECO:0007669"/>
    <property type="project" value="UniProtKB-UniRule"/>
</dbReference>
<dbReference type="GO" id="GO:0004826">
    <property type="term" value="F:phenylalanine-tRNA ligase activity"/>
    <property type="evidence" value="ECO:0007669"/>
    <property type="project" value="UniProtKB-UniRule"/>
</dbReference>
<dbReference type="GO" id="GO:0000049">
    <property type="term" value="F:tRNA binding"/>
    <property type="evidence" value="ECO:0007669"/>
    <property type="project" value="InterPro"/>
</dbReference>
<dbReference type="GO" id="GO:0006432">
    <property type="term" value="P:phenylalanyl-tRNA aminoacylation"/>
    <property type="evidence" value="ECO:0007669"/>
    <property type="project" value="UniProtKB-UniRule"/>
</dbReference>
<dbReference type="CDD" id="cd00496">
    <property type="entry name" value="PheRS_alpha_core"/>
    <property type="match status" value="1"/>
</dbReference>
<dbReference type="Gene3D" id="3.30.930.10">
    <property type="entry name" value="Bira Bifunctional Protein, Domain 2"/>
    <property type="match status" value="1"/>
</dbReference>
<dbReference type="HAMAP" id="MF_00281">
    <property type="entry name" value="Phe_tRNA_synth_alpha1"/>
    <property type="match status" value="1"/>
</dbReference>
<dbReference type="InterPro" id="IPR006195">
    <property type="entry name" value="aa-tRNA-synth_II"/>
</dbReference>
<dbReference type="InterPro" id="IPR045864">
    <property type="entry name" value="aa-tRNA-synth_II/BPL/LPL"/>
</dbReference>
<dbReference type="InterPro" id="IPR004529">
    <property type="entry name" value="Phe-tRNA-synth_IIc_asu"/>
</dbReference>
<dbReference type="InterPro" id="IPR022911">
    <property type="entry name" value="Phe_tRNA_ligase_alpha1_bac"/>
</dbReference>
<dbReference type="InterPro" id="IPR002319">
    <property type="entry name" value="Phenylalanyl-tRNA_Synthase"/>
</dbReference>
<dbReference type="NCBIfam" id="TIGR00468">
    <property type="entry name" value="pheS"/>
    <property type="match status" value="1"/>
</dbReference>
<dbReference type="PANTHER" id="PTHR11538:SF41">
    <property type="entry name" value="PHENYLALANINE--TRNA LIGASE, MITOCHONDRIAL"/>
    <property type="match status" value="1"/>
</dbReference>
<dbReference type="PANTHER" id="PTHR11538">
    <property type="entry name" value="PHENYLALANYL-TRNA SYNTHETASE"/>
    <property type="match status" value="1"/>
</dbReference>
<dbReference type="Pfam" id="PF01409">
    <property type="entry name" value="tRNA-synt_2d"/>
    <property type="match status" value="1"/>
</dbReference>
<dbReference type="SUPFAM" id="SSF55681">
    <property type="entry name" value="Class II aaRS and biotin synthetases"/>
    <property type="match status" value="1"/>
</dbReference>
<dbReference type="PROSITE" id="PS50862">
    <property type="entry name" value="AA_TRNA_LIGASE_II"/>
    <property type="match status" value="1"/>
</dbReference>
<reference key="1">
    <citation type="submission" date="2008-02" db="EMBL/GenBank/DDBJ databases">
        <title>Genome sequence of Ureaplasma parvum serovar 3.</title>
        <authorList>
            <person name="Methe B.A."/>
            <person name="Glass J."/>
            <person name="Waites K."/>
            <person name="Shrivastava S."/>
        </authorList>
    </citation>
    <scope>NUCLEOTIDE SEQUENCE [LARGE SCALE GENOMIC DNA]</scope>
    <source>
        <strain>ATCC 27815 / 27 / NCTC 11736</strain>
    </source>
</reference>
<evidence type="ECO:0000255" key="1">
    <source>
        <dbReference type="HAMAP-Rule" id="MF_00281"/>
    </source>
</evidence>
<sequence length="333" mass="38713">MDVINLIKNLKQILRTANNERHLIELKNIFVKQHLLPLYDELKKSANKKEMGLLINNFKQQIEFVTDQILKELNDKDDQVDLKKWTNKTLFAPFINNGHHHILNSIIDDIASFFKKLNFEIVSGSEVVSPIYNFDHLNIDENHPARASADSFFINSIKMLRTHCTTTTAQFLENNVNKDIRIMSFGNVYRKDDDDATHSHQFNQVDFVWVKEGLTVANLKWLIDSLIKYLFGQNLKTRYRLSFFPFTEPSFEVDVQCFKCDLKGCAVCKKSTWIEIMGTGMLHENVLKAANINDIRTGMAFGVGIDRIAMLKYEIDDIRYLYSNNFKFNAQIK</sequence>
<comment type="catalytic activity">
    <reaction evidence="1">
        <text>tRNA(Phe) + L-phenylalanine + ATP = L-phenylalanyl-tRNA(Phe) + AMP + diphosphate + H(+)</text>
        <dbReference type="Rhea" id="RHEA:19413"/>
        <dbReference type="Rhea" id="RHEA-COMP:9668"/>
        <dbReference type="Rhea" id="RHEA-COMP:9699"/>
        <dbReference type="ChEBI" id="CHEBI:15378"/>
        <dbReference type="ChEBI" id="CHEBI:30616"/>
        <dbReference type="ChEBI" id="CHEBI:33019"/>
        <dbReference type="ChEBI" id="CHEBI:58095"/>
        <dbReference type="ChEBI" id="CHEBI:78442"/>
        <dbReference type="ChEBI" id="CHEBI:78531"/>
        <dbReference type="ChEBI" id="CHEBI:456215"/>
        <dbReference type="EC" id="6.1.1.20"/>
    </reaction>
</comment>
<comment type="cofactor">
    <cofactor evidence="1">
        <name>Mg(2+)</name>
        <dbReference type="ChEBI" id="CHEBI:18420"/>
    </cofactor>
    <text evidence="1">Binds 2 magnesium ions per tetramer.</text>
</comment>
<comment type="subunit">
    <text evidence="1">Tetramer of two alpha and two beta subunits.</text>
</comment>
<comment type="subcellular location">
    <subcellularLocation>
        <location evidence="1">Cytoplasm</location>
    </subcellularLocation>
</comment>
<comment type="similarity">
    <text evidence="1">Belongs to the class-II aminoacyl-tRNA synthetase family. Phe-tRNA synthetase alpha subunit type 1 subfamily.</text>
</comment>
<keyword id="KW-0030">Aminoacyl-tRNA synthetase</keyword>
<keyword id="KW-0067">ATP-binding</keyword>
<keyword id="KW-0963">Cytoplasm</keyword>
<keyword id="KW-0436">Ligase</keyword>
<keyword id="KW-0460">Magnesium</keyword>
<keyword id="KW-0479">Metal-binding</keyword>
<keyword id="KW-0547">Nucleotide-binding</keyword>
<keyword id="KW-0648">Protein biosynthesis</keyword>
<protein>
    <recommendedName>
        <fullName evidence="1">Phenylalanine--tRNA ligase alpha subunit</fullName>
        <ecNumber evidence="1">6.1.1.20</ecNumber>
    </recommendedName>
    <alternativeName>
        <fullName evidence="1">Phenylalanyl-tRNA synthetase alpha subunit</fullName>
        <shortName evidence="1">PheRS</shortName>
    </alternativeName>
</protein>
<organism>
    <name type="scientific">Ureaplasma parvum serovar 3 (strain ATCC 27815 / 27 / NCTC 11736)</name>
    <dbReference type="NCBI Taxonomy" id="505682"/>
    <lineage>
        <taxon>Bacteria</taxon>
        <taxon>Bacillati</taxon>
        <taxon>Mycoplasmatota</taxon>
        <taxon>Mycoplasmoidales</taxon>
        <taxon>Mycoplasmoidaceae</taxon>
        <taxon>Ureaplasma</taxon>
    </lineage>
</organism>
<gene>
    <name evidence="1" type="primary">pheS</name>
    <name type="ordered locus">UPA3_0477</name>
</gene>
<name>SYFA_UREP2</name>
<feature type="chain" id="PRO_1000078856" description="Phenylalanine--tRNA ligase alpha subunit">
    <location>
        <begin position="1"/>
        <end position="333"/>
    </location>
</feature>
<feature type="binding site" evidence="1">
    <location>
        <position position="248"/>
    </location>
    <ligand>
        <name>Mg(2+)</name>
        <dbReference type="ChEBI" id="CHEBI:18420"/>
        <note>shared with beta subunit</note>
    </ligand>
</feature>